<protein>
    <recommendedName>
        <fullName evidence="1">Ribosomal protein L11 methyltransferase</fullName>
        <shortName evidence="1">L11 Mtase</shortName>
        <ecNumber evidence="1">2.1.1.-</ecNumber>
    </recommendedName>
</protein>
<feature type="chain" id="PRO_1000083348" description="Ribosomal protein L11 methyltransferase">
    <location>
        <begin position="1"/>
        <end position="285"/>
    </location>
</feature>
<feature type="binding site" evidence="1">
    <location>
        <position position="131"/>
    </location>
    <ligand>
        <name>S-adenosyl-L-methionine</name>
        <dbReference type="ChEBI" id="CHEBI:59789"/>
    </ligand>
</feature>
<feature type="binding site" evidence="1">
    <location>
        <position position="154"/>
    </location>
    <ligand>
        <name>S-adenosyl-L-methionine</name>
        <dbReference type="ChEBI" id="CHEBI:59789"/>
    </ligand>
</feature>
<feature type="binding site" evidence="1">
    <location>
        <position position="176"/>
    </location>
    <ligand>
        <name>S-adenosyl-L-methionine</name>
        <dbReference type="ChEBI" id="CHEBI:59789"/>
    </ligand>
</feature>
<feature type="binding site" evidence="1">
    <location>
        <position position="223"/>
    </location>
    <ligand>
        <name>S-adenosyl-L-methionine</name>
        <dbReference type="ChEBI" id="CHEBI:59789"/>
    </ligand>
</feature>
<comment type="function">
    <text evidence="1">Methylates ribosomal protein L11.</text>
</comment>
<comment type="catalytic activity">
    <reaction evidence="1">
        <text>L-lysyl-[protein] + 3 S-adenosyl-L-methionine = N(6),N(6),N(6)-trimethyl-L-lysyl-[protein] + 3 S-adenosyl-L-homocysteine + 3 H(+)</text>
        <dbReference type="Rhea" id="RHEA:54192"/>
        <dbReference type="Rhea" id="RHEA-COMP:9752"/>
        <dbReference type="Rhea" id="RHEA-COMP:13826"/>
        <dbReference type="ChEBI" id="CHEBI:15378"/>
        <dbReference type="ChEBI" id="CHEBI:29969"/>
        <dbReference type="ChEBI" id="CHEBI:57856"/>
        <dbReference type="ChEBI" id="CHEBI:59789"/>
        <dbReference type="ChEBI" id="CHEBI:61961"/>
    </reaction>
</comment>
<comment type="subcellular location">
    <subcellularLocation>
        <location evidence="1">Cytoplasm</location>
    </subcellularLocation>
</comment>
<comment type="similarity">
    <text evidence="1">Belongs to the methyltransferase superfamily. PrmA family.</text>
</comment>
<dbReference type="EC" id="2.1.1.-" evidence="1"/>
<dbReference type="EMBL" id="CP000911">
    <property type="protein sequence ID" value="ABY38506.1"/>
    <property type="molecule type" value="Genomic_DNA"/>
</dbReference>
<dbReference type="RefSeq" id="WP_006071120.1">
    <property type="nucleotide sequence ID" value="NC_010169.1"/>
</dbReference>
<dbReference type="SMR" id="B0CHK5"/>
<dbReference type="KEGG" id="bmt:BSUIS_A1468"/>
<dbReference type="HOGENOM" id="CLU_049382_3_0_5"/>
<dbReference type="Proteomes" id="UP000008545">
    <property type="component" value="Chromosome I"/>
</dbReference>
<dbReference type="GO" id="GO:0005737">
    <property type="term" value="C:cytoplasm"/>
    <property type="evidence" value="ECO:0007669"/>
    <property type="project" value="UniProtKB-SubCell"/>
</dbReference>
<dbReference type="GO" id="GO:0016279">
    <property type="term" value="F:protein-lysine N-methyltransferase activity"/>
    <property type="evidence" value="ECO:0007669"/>
    <property type="project" value="RHEA"/>
</dbReference>
<dbReference type="GO" id="GO:0032259">
    <property type="term" value="P:methylation"/>
    <property type="evidence" value="ECO:0007669"/>
    <property type="project" value="UniProtKB-KW"/>
</dbReference>
<dbReference type="CDD" id="cd02440">
    <property type="entry name" value="AdoMet_MTases"/>
    <property type="match status" value="1"/>
</dbReference>
<dbReference type="Gene3D" id="3.40.50.150">
    <property type="entry name" value="Vaccinia Virus protein VP39"/>
    <property type="match status" value="1"/>
</dbReference>
<dbReference type="HAMAP" id="MF_00735">
    <property type="entry name" value="Methyltr_PrmA"/>
    <property type="match status" value="1"/>
</dbReference>
<dbReference type="InterPro" id="IPR050078">
    <property type="entry name" value="Ribosomal_L11_MeTrfase_PrmA"/>
</dbReference>
<dbReference type="InterPro" id="IPR004498">
    <property type="entry name" value="Ribosomal_PrmA_MeTrfase"/>
</dbReference>
<dbReference type="InterPro" id="IPR029063">
    <property type="entry name" value="SAM-dependent_MTases_sf"/>
</dbReference>
<dbReference type="NCBIfam" id="NF001784">
    <property type="entry name" value="PRK00517.2-1"/>
    <property type="match status" value="1"/>
</dbReference>
<dbReference type="PANTHER" id="PTHR43648">
    <property type="entry name" value="ELECTRON TRANSFER FLAVOPROTEIN BETA SUBUNIT LYSINE METHYLTRANSFERASE"/>
    <property type="match status" value="1"/>
</dbReference>
<dbReference type="PANTHER" id="PTHR43648:SF1">
    <property type="entry name" value="ELECTRON TRANSFER FLAVOPROTEIN BETA SUBUNIT LYSINE METHYLTRANSFERASE"/>
    <property type="match status" value="1"/>
</dbReference>
<dbReference type="Pfam" id="PF06325">
    <property type="entry name" value="PrmA"/>
    <property type="match status" value="1"/>
</dbReference>
<dbReference type="PIRSF" id="PIRSF000401">
    <property type="entry name" value="RPL11_MTase"/>
    <property type="match status" value="1"/>
</dbReference>
<dbReference type="SUPFAM" id="SSF53335">
    <property type="entry name" value="S-adenosyl-L-methionine-dependent methyltransferases"/>
    <property type="match status" value="1"/>
</dbReference>
<gene>
    <name evidence="1" type="primary">prmA</name>
    <name type="ordered locus">BSUIS_A1468</name>
</gene>
<evidence type="ECO:0000255" key="1">
    <source>
        <dbReference type="HAMAP-Rule" id="MF_00735"/>
    </source>
</evidence>
<organism>
    <name type="scientific">Brucella suis (strain ATCC 23445 / NCTC 10510)</name>
    <dbReference type="NCBI Taxonomy" id="470137"/>
    <lineage>
        <taxon>Bacteria</taxon>
        <taxon>Pseudomonadati</taxon>
        <taxon>Pseudomonadota</taxon>
        <taxon>Alphaproteobacteria</taxon>
        <taxon>Hyphomicrobiales</taxon>
        <taxon>Brucellaceae</taxon>
        <taxon>Brucella/Ochrobactrum group</taxon>
        <taxon>Brucella</taxon>
    </lineage>
</organism>
<reference key="1">
    <citation type="submission" date="2007-12" db="EMBL/GenBank/DDBJ databases">
        <title>Brucella suis ATCC 23445 whole genome shotgun sequencing project.</title>
        <authorList>
            <person name="Setubal J.C."/>
            <person name="Bowns C."/>
            <person name="Boyle S."/>
            <person name="Crasta O.R."/>
            <person name="Czar M.J."/>
            <person name="Dharmanolla C."/>
            <person name="Gillespie J.J."/>
            <person name="Kenyon R.W."/>
            <person name="Lu J."/>
            <person name="Mane S."/>
            <person name="Mohapatra S."/>
            <person name="Nagrani S."/>
            <person name="Purkayastha A."/>
            <person name="Rajasimha H.K."/>
            <person name="Shallom J.M."/>
            <person name="Shallom S."/>
            <person name="Shukla M."/>
            <person name="Snyder E.E."/>
            <person name="Sobral B.W."/>
            <person name="Wattam A.R."/>
            <person name="Will R."/>
            <person name="Williams K."/>
            <person name="Yoo H."/>
            <person name="Bruce D."/>
            <person name="Detter C."/>
            <person name="Munk C."/>
            <person name="Brettin T.S."/>
        </authorList>
    </citation>
    <scope>NUCLEOTIDE SEQUENCE [LARGE SCALE GENOMIC DNA]</scope>
    <source>
        <strain>ATCC 23445 / NCTC 10510</strain>
    </source>
</reference>
<accession>B0CHK5</accession>
<sequence>MAQSRLFFSADKAEAERTYNILEQAFEDDGFPIAITEIDEDRQIFEVSVYVEDDAEEVAARVDALVGPGLFDTEELPDIDWVTHSLEGLKPVRAGHFFVHGSHDRDKIEPGDIAIEIDAGLAFGTGHHGTTAGCLELIEETVQTEHPTNALDLGTGSAVLAIAIARLAPIPILATDIDPIAVTVAAENAAKNGVAEHIVTATAEGFGHPIFRSYSPFDLIVANILANPLIELAPSIKEHLAPGGSIILSGILDSQHDAVLAAYQTQGLTHQKTLHREGWVAIHLK</sequence>
<keyword id="KW-0963">Cytoplasm</keyword>
<keyword id="KW-0489">Methyltransferase</keyword>
<keyword id="KW-0949">S-adenosyl-L-methionine</keyword>
<keyword id="KW-0808">Transferase</keyword>
<proteinExistence type="inferred from homology"/>
<name>PRMA_BRUSI</name>